<feature type="signal peptide" evidence="2">
    <location>
        <begin position="1"/>
        <end position="24"/>
    </location>
</feature>
<feature type="chain" id="PRO_0000379758" description="Defensin-like protein 301">
    <location>
        <begin position="25"/>
        <end position="97"/>
    </location>
</feature>
<feature type="disulfide bond" evidence="1">
    <location>
        <begin position="28"/>
        <end position="47"/>
    </location>
</feature>
<feature type="disulfide bond" evidence="1">
    <location>
        <begin position="34"/>
        <end position="53"/>
    </location>
</feature>
<feature type="disulfide bond" evidence="1">
    <location>
        <begin position="39"/>
        <end position="55"/>
    </location>
</feature>
<feature type="disulfide bond" evidence="1">
    <location>
        <begin position="65"/>
        <end position="84"/>
    </location>
</feature>
<feature type="disulfide bond" evidence="1">
    <location>
        <begin position="71"/>
        <end position="92"/>
    </location>
</feature>
<feature type="disulfide bond" evidence="1">
    <location>
        <begin position="76"/>
        <end position="94"/>
    </location>
</feature>
<proteinExistence type="inferred from homology"/>
<dbReference type="EMBL" id="AL162873">
    <property type="status" value="NOT_ANNOTATED_CDS"/>
    <property type="molecule type" value="Genomic_DNA"/>
</dbReference>
<dbReference type="EMBL" id="CP002688">
    <property type="protein sequence ID" value="AED90688.1"/>
    <property type="molecule type" value="Genomic_DNA"/>
</dbReference>
<dbReference type="EMBL" id="BX833563">
    <property type="status" value="NOT_ANNOTATED_CDS"/>
    <property type="molecule type" value="mRNA"/>
</dbReference>
<dbReference type="RefSeq" id="NP_974727.1">
    <property type="nucleotide sequence ID" value="NM_202998.2"/>
</dbReference>
<dbReference type="PaxDb" id="3702-AT5G04045.1"/>
<dbReference type="EnsemblPlants" id="AT5G04045.1">
    <property type="protein sequence ID" value="AT5G04045.1"/>
    <property type="gene ID" value="AT5G04045"/>
</dbReference>
<dbReference type="GeneID" id="2745976"/>
<dbReference type="Gramene" id="AT5G04045.1">
    <property type="protein sequence ID" value="AT5G04045.1"/>
    <property type="gene ID" value="AT5G04045"/>
</dbReference>
<dbReference type="KEGG" id="ath:AT5G04045"/>
<dbReference type="Araport" id="AT5G04045"/>
<dbReference type="TAIR" id="AT5G04045"/>
<dbReference type="HOGENOM" id="CLU_2389210_0_0_1"/>
<dbReference type="InParanoid" id="Q3E715"/>
<dbReference type="OMA" id="PNSHVIC"/>
<dbReference type="OrthoDB" id="1049366at2759"/>
<dbReference type="PhylomeDB" id="Q3E715"/>
<dbReference type="PRO" id="PR:Q3E715"/>
<dbReference type="Proteomes" id="UP000006548">
    <property type="component" value="Chromosome 5"/>
</dbReference>
<dbReference type="ExpressionAtlas" id="Q3E715">
    <property type="expression patterns" value="baseline and differential"/>
</dbReference>
<dbReference type="GO" id="GO:0005576">
    <property type="term" value="C:extracellular region"/>
    <property type="evidence" value="ECO:0007669"/>
    <property type="project" value="UniProtKB-SubCell"/>
</dbReference>
<dbReference type="GO" id="GO:0050832">
    <property type="term" value="P:defense response to fungus"/>
    <property type="evidence" value="ECO:0007669"/>
    <property type="project" value="UniProtKB-KW"/>
</dbReference>
<dbReference type="GO" id="GO:0031640">
    <property type="term" value="P:killing of cells of another organism"/>
    <property type="evidence" value="ECO:0007669"/>
    <property type="project" value="UniProtKB-KW"/>
</dbReference>
<keyword id="KW-0929">Antimicrobial</keyword>
<keyword id="KW-1015">Disulfide bond</keyword>
<keyword id="KW-0295">Fungicide</keyword>
<keyword id="KW-0611">Plant defense</keyword>
<keyword id="KW-1185">Reference proteome</keyword>
<keyword id="KW-0964">Secreted</keyword>
<keyword id="KW-0732">Signal</keyword>
<gene>
    <name type="ordered locus">At5g04045</name>
    <name type="ORF">F8F6</name>
</gene>
<evidence type="ECO:0000250" key="1"/>
<evidence type="ECO:0000255" key="2"/>
<evidence type="ECO:0000305" key="3"/>
<reference key="1">
    <citation type="journal article" date="2000" name="Nature">
        <title>Sequence and analysis of chromosome 5 of the plant Arabidopsis thaliana.</title>
        <authorList>
            <person name="Tabata S."/>
            <person name="Kaneko T."/>
            <person name="Nakamura Y."/>
            <person name="Kotani H."/>
            <person name="Kato T."/>
            <person name="Asamizu E."/>
            <person name="Miyajima N."/>
            <person name="Sasamoto S."/>
            <person name="Kimura T."/>
            <person name="Hosouchi T."/>
            <person name="Kawashima K."/>
            <person name="Kohara M."/>
            <person name="Matsumoto M."/>
            <person name="Matsuno A."/>
            <person name="Muraki A."/>
            <person name="Nakayama S."/>
            <person name="Nakazaki N."/>
            <person name="Naruo K."/>
            <person name="Okumura S."/>
            <person name="Shinpo S."/>
            <person name="Takeuchi C."/>
            <person name="Wada T."/>
            <person name="Watanabe A."/>
            <person name="Yamada M."/>
            <person name="Yasuda M."/>
            <person name="Sato S."/>
            <person name="de la Bastide M."/>
            <person name="Huang E."/>
            <person name="Spiegel L."/>
            <person name="Gnoj L."/>
            <person name="O'Shaughnessy A."/>
            <person name="Preston R."/>
            <person name="Habermann K."/>
            <person name="Murray J."/>
            <person name="Johnson D."/>
            <person name="Rohlfing T."/>
            <person name="Nelson J."/>
            <person name="Stoneking T."/>
            <person name="Pepin K."/>
            <person name="Spieth J."/>
            <person name="Sekhon M."/>
            <person name="Armstrong J."/>
            <person name="Becker M."/>
            <person name="Belter E."/>
            <person name="Cordum H."/>
            <person name="Cordes M."/>
            <person name="Courtney L."/>
            <person name="Courtney W."/>
            <person name="Dante M."/>
            <person name="Du H."/>
            <person name="Edwards J."/>
            <person name="Fryman J."/>
            <person name="Haakensen B."/>
            <person name="Lamar E."/>
            <person name="Latreille P."/>
            <person name="Leonard S."/>
            <person name="Meyer R."/>
            <person name="Mulvaney E."/>
            <person name="Ozersky P."/>
            <person name="Riley A."/>
            <person name="Strowmatt C."/>
            <person name="Wagner-McPherson C."/>
            <person name="Wollam A."/>
            <person name="Yoakum M."/>
            <person name="Bell M."/>
            <person name="Dedhia N."/>
            <person name="Parnell L."/>
            <person name="Shah R."/>
            <person name="Rodriguez M."/>
            <person name="Hoon See L."/>
            <person name="Vil D."/>
            <person name="Baker J."/>
            <person name="Kirchoff K."/>
            <person name="Toth K."/>
            <person name="King L."/>
            <person name="Bahret A."/>
            <person name="Miller B."/>
            <person name="Marra M.A."/>
            <person name="Martienssen R."/>
            <person name="McCombie W.R."/>
            <person name="Wilson R.K."/>
            <person name="Murphy G."/>
            <person name="Bancroft I."/>
            <person name="Volckaert G."/>
            <person name="Wambutt R."/>
            <person name="Duesterhoeft A."/>
            <person name="Stiekema W."/>
            <person name="Pohl T."/>
            <person name="Entian K.-D."/>
            <person name="Terryn N."/>
            <person name="Hartley N."/>
            <person name="Bent E."/>
            <person name="Johnson S."/>
            <person name="Langham S.-A."/>
            <person name="McCullagh B."/>
            <person name="Robben J."/>
            <person name="Grymonprez B."/>
            <person name="Zimmermann W."/>
            <person name="Ramsperger U."/>
            <person name="Wedler H."/>
            <person name="Balke K."/>
            <person name="Wedler E."/>
            <person name="Peters S."/>
            <person name="van Staveren M."/>
            <person name="Dirkse W."/>
            <person name="Mooijman P."/>
            <person name="Klein Lankhorst R."/>
            <person name="Weitzenegger T."/>
            <person name="Bothe G."/>
            <person name="Rose M."/>
            <person name="Hauf J."/>
            <person name="Berneiser S."/>
            <person name="Hempel S."/>
            <person name="Feldpausch M."/>
            <person name="Lamberth S."/>
            <person name="Villarroel R."/>
            <person name="Gielen J."/>
            <person name="Ardiles W."/>
            <person name="Bents O."/>
            <person name="Lemcke K."/>
            <person name="Kolesov G."/>
            <person name="Mayer K.F.X."/>
            <person name="Rudd S."/>
            <person name="Schoof H."/>
            <person name="Schueller C."/>
            <person name="Zaccaria P."/>
            <person name="Mewes H.-W."/>
            <person name="Bevan M."/>
            <person name="Fransz P.F."/>
        </authorList>
    </citation>
    <scope>NUCLEOTIDE SEQUENCE [LARGE SCALE GENOMIC DNA]</scope>
    <source>
        <strain>cv. Columbia</strain>
    </source>
</reference>
<reference key="2">
    <citation type="journal article" date="2017" name="Plant J.">
        <title>Araport11: a complete reannotation of the Arabidopsis thaliana reference genome.</title>
        <authorList>
            <person name="Cheng C.Y."/>
            <person name="Krishnakumar V."/>
            <person name="Chan A.P."/>
            <person name="Thibaud-Nissen F."/>
            <person name="Schobel S."/>
            <person name="Town C.D."/>
        </authorList>
    </citation>
    <scope>GENOME REANNOTATION</scope>
    <source>
        <strain>cv. Columbia</strain>
    </source>
</reference>
<reference key="3">
    <citation type="journal article" date="2004" name="Genome Res.">
        <title>Whole genome sequence comparisons and 'full-length' cDNA sequences: a combined approach to evaluate and improve Arabidopsis genome annotation.</title>
        <authorList>
            <person name="Castelli V."/>
            <person name="Aury J.-M."/>
            <person name="Jaillon O."/>
            <person name="Wincker P."/>
            <person name="Clepet C."/>
            <person name="Menard M."/>
            <person name="Cruaud C."/>
            <person name="Quetier F."/>
            <person name="Scarpelli C."/>
            <person name="Schaechter V."/>
            <person name="Temple G."/>
            <person name="Caboche M."/>
            <person name="Weissenbach J."/>
            <person name="Salanoubat M."/>
        </authorList>
    </citation>
    <scope>NUCLEOTIDE SEQUENCE [LARGE SCALE MRNA]</scope>
    <source>
        <strain>cv. Columbia</strain>
    </source>
</reference>
<reference key="4">
    <citation type="journal article" date="2005" name="Plant Physiol.">
        <title>Genome organization of more than 300 defensin-like genes in Arabidopsis.</title>
        <authorList>
            <person name="Silverstein K.A.T."/>
            <person name="Graham M.A."/>
            <person name="Paape T.D."/>
            <person name="VandenBosch K.A."/>
        </authorList>
    </citation>
    <scope>GENE FAMILY</scope>
</reference>
<protein>
    <recommendedName>
        <fullName>Defensin-like protein 301</fullName>
    </recommendedName>
</protein>
<name>DF301_ARATH</name>
<organism>
    <name type="scientific">Arabidopsis thaliana</name>
    <name type="common">Mouse-ear cress</name>
    <dbReference type="NCBI Taxonomy" id="3702"/>
    <lineage>
        <taxon>Eukaryota</taxon>
        <taxon>Viridiplantae</taxon>
        <taxon>Streptophyta</taxon>
        <taxon>Embryophyta</taxon>
        <taxon>Tracheophyta</taxon>
        <taxon>Spermatophyta</taxon>
        <taxon>Magnoliopsida</taxon>
        <taxon>eudicotyledons</taxon>
        <taxon>Gunneridae</taxon>
        <taxon>Pentapetalae</taxon>
        <taxon>rosids</taxon>
        <taxon>malvids</taxon>
        <taxon>Brassicales</taxon>
        <taxon>Brassicaceae</taxon>
        <taxon>Camelineae</taxon>
        <taxon>Arabidopsis</taxon>
    </lineage>
</organism>
<sequence length="97" mass="10401">MEKVTSIFFVLLLISSCLILRSQGQFRCKSVAECDSRGCRVGTHVICNEHHICTCAHGSPIGGQCDGVEDCDLSGCPPNSHVICDRIGGNFCTCVPN</sequence>
<comment type="subcellular location">
    <subcellularLocation>
        <location evidence="1">Secreted</location>
    </subcellularLocation>
</comment>
<comment type="similarity">
    <text evidence="3">Belongs to the DEFL family.</text>
</comment>
<comment type="caution">
    <text evidence="3">Contains 6 disulfide bonds instead of the 4 disulfide bonds, which are conserved features of the family.</text>
</comment>
<accession>Q3E715</accession>